<accession>O74781</accession>
<accession>P78751</accession>
<feature type="chain" id="PRO_0000151663" description="Probable arginine--tRNA ligase, cytoplasmic">
    <location>
        <begin position="1"/>
        <end position="618"/>
    </location>
</feature>
<feature type="region of interest" description="Interaction with tRNA" evidence="2">
    <location>
        <begin position="60"/>
        <end position="61"/>
    </location>
</feature>
<feature type="region of interest" description="Interaction with tRNA" evidence="2">
    <location>
        <begin position="104"/>
        <end position="109"/>
    </location>
</feature>
<feature type="region of interest" description="Interaction with tRNA" evidence="2">
    <location>
        <begin position="496"/>
        <end position="510"/>
    </location>
</feature>
<feature type="short sequence motif" description="'HIGH' region">
    <location>
        <begin position="149"/>
        <end position="160"/>
    </location>
</feature>
<feature type="binding site" evidence="2">
    <location>
        <begin position="146"/>
        <end position="151"/>
    </location>
    <ligand>
        <name>L-arginine</name>
        <dbReference type="ChEBI" id="CHEBI:32682"/>
    </ligand>
</feature>
<feature type="binding site" evidence="2">
    <location>
        <position position="160"/>
    </location>
    <ligand>
        <name>L-arginine</name>
        <dbReference type="ChEBI" id="CHEBI:32682"/>
    </ligand>
</feature>
<feature type="binding site" evidence="2">
    <location>
        <position position="359"/>
    </location>
    <ligand>
        <name>L-arginine</name>
        <dbReference type="ChEBI" id="CHEBI:32682"/>
    </ligand>
</feature>
<feature type="binding site" evidence="2">
    <location>
        <position position="363"/>
    </location>
    <ligand>
        <name>L-arginine</name>
        <dbReference type="ChEBI" id="CHEBI:32682"/>
    </ligand>
</feature>
<feature type="binding site" evidence="2">
    <location>
        <position position="387"/>
    </location>
    <ligand>
        <name>L-arginine</name>
        <dbReference type="ChEBI" id="CHEBI:32682"/>
    </ligand>
</feature>
<feature type="sequence conflict" description="In Ref. 2; BAA13762." evidence="4" ref="2">
    <original>Y</original>
    <variation>S</variation>
    <location>
        <position position="359"/>
    </location>
</feature>
<feature type="sequence conflict" description="In Ref. 2; BAA13762." evidence="4" ref="2">
    <original>M</original>
    <variation>T</variation>
    <location>
        <position position="401"/>
    </location>
</feature>
<dbReference type="EC" id="6.1.1.19"/>
<dbReference type="EMBL" id="CU329671">
    <property type="protein sequence ID" value="CAA21267.1"/>
    <property type="molecule type" value="Genomic_DNA"/>
</dbReference>
<dbReference type="EMBL" id="D89099">
    <property type="protein sequence ID" value="BAA13762.1"/>
    <property type="molecule type" value="mRNA"/>
</dbReference>
<dbReference type="PIR" id="T39985">
    <property type="entry name" value="T39985"/>
</dbReference>
<dbReference type="PIR" id="T42007">
    <property type="entry name" value="T42007"/>
</dbReference>
<dbReference type="RefSeq" id="NP_596077.1">
    <property type="nucleotide sequence ID" value="NM_001021989.2"/>
</dbReference>
<dbReference type="SMR" id="O74781"/>
<dbReference type="FunCoup" id="O74781">
    <property type="interactions" value="714"/>
</dbReference>
<dbReference type="STRING" id="284812.O74781"/>
<dbReference type="iPTMnet" id="O74781"/>
<dbReference type="PaxDb" id="4896-SPBC25B2.09c.1"/>
<dbReference type="EnsemblFungi" id="SPBC25B2.09c.1">
    <property type="protein sequence ID" value="SPBC25B2.09c.1:pep"/>
    <property type="gene ID" value="SPBC25B2.09c"/>
</dbReference>
<dbReference type="GeneID" id="2540548"/>
<dbReference type="KEGG" id="spo:2540548"/>
<dbReference type="PomBase" id="SPBC25B2.09c">
    <property type="gene designation" value="mrs1"/>
</dbReference>
<dbReference type="VEuPathDB" id="FungiDB:SPBC25B2.09c"/>
<dbReference type="eggNOG" id="KOG1195">
    <property type="taxonomic scope" value="Eukaryota"/>
</dbReference>
<dbReference type="HOGENOM" id="CLU_006406_6_2_1"/>
<dbReference type="InParanoid" id="O74781"/>
<dbReference type="OMA" id="YEFKWER"/>
<dbReference type="PhylomeDB" id="O74781"/>
<dbReference type="PRO" id="PR:O74781"/>
<dbReference type="Proteomes" id="UP000002485">
    <property type="component" value="Chromosome II"/>
</dbReference>
<dbReference type="GO" id="GO:0005829">
    <property type="term" value="C:cytosol"/>
    <property type="evidence" value="ECO:0007005"/>
    <property type="project" value="PomBase"/>
</dbReference>
<dbReference type="GO" id="GO:0005759">
    <property type="term" value="C:mitochondrial matrix"/>
    <property type="evidence" value="ECO:0000305"/>
    <property type="project" value="PomBase"/>
</dbReference>
<dbReference type="GO" id="GO:0005739">
    <property type="term" value="C:mitochondrion"/>
    <property type="evidence" value="ECO:0000318"/>
    <property type="project" value="GO_Central"/>
</dbReference>
<dbReference type="GO" id="GO:0004814">
    <property type="term" value="F:arginine-tRNA ligase activity"/>
    <property type="evidence" value="ECO:0000318"/>
    <property type="project" value="GO_Central"/>
</dbReference>
<dbReference type="GO" id="GO:0005524">
    <property type="term" value="F:ATP binding"/>
    <property type="evidence" value="ECO:0007669"/>
    <property type="project" value="UniProtKB-KW"/>
</dbReference>
<dbReference type="GO" id="GO:0006420">
    <property type="term" value="P:arginyl-tRNA aminoacylation"/>
    <property type="evidence" value="ECO:0000318"/>
    <property type="project" value="GO_Central"/>
</dbReference>
<dbReference type="GO" id="GO:0002181">
    <property type="term" value="P:cytoplasmic translation"/>
    <property type="evidence" value="ECO:0000303"/>
    <property type="project" value="PomBase"/>
</dbReference>
<dbReference type="GO" id="GO:0070144">
    <property type="term" value="P:mitochondrial arginyl-tRNA aminoacylation"/>
    <property type="evidence" value="ECO:0000266"/>
    <property type="project" value="PomBase"/>
</dbReference>
<dbReference type="GO" id="GO:0032543">
    <property type="term" value="P:mitochondrial translation"/>
    <property type="evidence" value="ECO:0000318"/>
    <property type="project" value="GO_Central"/>
</dbReference>
<dbReference type="CDD" id="cd07956">
    <property type="entry name" value="Anticodon_Ia_Arg"/>
    <property type="match status" value="1"/>
</dbReference>
<dbReference type="CDD" id="cd00671">
    <property type="entry name" value="ArgRS_core"/>
    <property type="match status" value="1"/>
</dbReference>
<dbReference type="FunFam" id="1.10.730.10:FF:000006">
    <property type="entry name" value="Arginyl-tRNA synthetase 2, mitochondrial"/>
    <property type="match status" value="1"/>
</dbReference>
<dbReference type="FunFam" id="3.40.50.620:FF:000058">
    <property type="entry name" value="Mitochondrial arginyl-tRNA synthetase"/>
    <property type="match status" value="1"/>
</dbReference>
<dbReference type="Gene3D" id="3.30.1360.70">
    <property type="entry name" value="Arginyl tRNA synthetase N-terminal domain"/>
    <property type="match status" value="1"/>
</dbReference>
<dbReference type="Gene3D" id="3.40.50.620">
    <property type="entry name" value="HUPs"/>
    <property type="match status" value="1"/>
</dbReference>
<dbReference type="Gene3D" id="1.10.730.10">
    <property type="entry name" value="Isoleucyl-tRNA Synthetase, Domain 1"/>
    <property type="match status" value="1"/>
</dbReference>
<dbReference type="InterPro" id="IPR001412">
    <property type="entry name" value="aa-tRNA-synth_I_CS"/>
</dbReference>
<dbReference type="InterPro" id="IPR001278">
    <property type="entry name" value="Arg-tRNA-ligase"/>
</dbReference>
<dbReference type="InterPro" id="IPR005148">
    <property type="entry name" value="Arg-tRNA-synth_N"/>
</dbReference>
<dbReference type="InterPro" id="IPR036695">
    <property type="entry name" value="Arg-tRNA-synth_N_sf"/>
</dbReference>
<dbReference type="InterPro" id="IPR035684">
    <property type="entry name" value="ArgRS_core"/>
</dbReference>
<dbReference type="InterPro" id="IPR008909">
    <property type="entry name" value="DALR_anticod-bd"/>
</dbReference>
<dbReference type="InterPro" id="IPR014729">
    <property type="entry name" value="Rossmann-like_a/b/a_fold"/>
</dbReference>
<dbReference type="InterPro" id="IPR009080">
    <property type="entry name" value="tRNAsynth_Ia_anticodon-bd"/>
</dbReference>
<dbReference type="NCBIfam" id="TIGR00456">
    <property type="entry name" value="argS"/>
    <property type="match status" value="1"/>
</dbReference>
<dbReference type="PANTHER" id="PTHR11956:SF11">
    <property type="entry name" value="ARGININE--TRNA LIGASE, MITOCHONDRIAL-RELATED"/>
    <property type="match status" value="1"/>
</dbReference>
<dbReference type="PANTHER" id="PTHR11956">
    <property type="entry name" value="ARGINYL-TRNA SYNTHETASE"/>
    <property type="match status" value="1"/>
</dbReference>
<dbReference type="Pfam" id="PF03485">
    <property type="entry name" value="Arg_tRNA_synt_N"/>
    <property type="match status" value="1"/>
</dbReference>
<dbReference type="Pfam" id="PF05746">
    <property type="entry name" value="DALR_1"/>
    <property type="match status" value="1"/>
</dbReference>
<dbReference type="Pfam" id="PF00750">
    <property type="entry name" value="tRNA-synt_1d"/>
    <property type="match status" value="1"/>
</dbReference>
<dbReference type="PRINTS" id="PR01038">
    <property type="entry name" value="TRNASYNTHARG"/>
</dbReference>
<dbReference type="SMART" id="SM01016">
    <property type="entry name" value="Arg_tRNA_synt_N"/>
    <property type="match status" value="1"/>
</dbReference>
<dbReference type="SMART" id="SM00836">
    <property type="entry name" value="DALR_1"/>
    <property type="match status" value="1"/>
</dbReference>
<dbReference type="SUPFAM" id="SSF47323">
    <property type="entry name" value="Anticodon-binding domain of a subclass of class I aminoacyl-tRNA synthetases"/>
    <property type="match status" value="1"/>
</dbReference>
<dbReference type="SUPFAM" id="SSF55190">
    <property type="entry name" value="Arginyl-tRNA synthetase (ArgRS), N-terminal 'additional' domain"/>
    <property type="match status" value="1"/>
</dbReference>
<dbReference type="SUPFAM" id="SSF52374">
    <property type="entry name" value="Nucleotidylyl transferase"/>
    <property type="match status" value="1"/>
</dbReference>
<dbReference type="PROSITE" id="PS00178">
    <property type="entry name" value="AA_TRNA_LIGASE_I"/>
    <property type="match status" value="1"/>
</dbReference>
<reference key="1">
    <citation type="journal article" date="2002" name="Nature">
        <title>The genome sequence of Schizosaccharomyces pombe.</title>
        <authorList>
            <person name="Wood V."/>
            <person name="Gwilliam R."/>
            <person name="Rajandream M.A."/>
            <person name="Lyne M.H."/>
            <person name="Lyne R."/>
            <person name="Stewart A."/>
            <person name="Sgouros J.G."/>
            <person name="Peat N."/>
            <person name="Hayles J."/>
            <person name="Baker S.G."/>
            <person name="Basham D."/>
            <person name="Bowman S."/>
            <person name="Brooks K."/>
            <person name="Brown D."/>
            <person name="Brown S."/>
            <person name="Chillingworth T."/>
            <person name="Churcher C.M."/>
            <person name="Collins M."/>
            <person name="Connor R."/>
            <person name="Cronin A."/>
            <person name="Davis P."/>
            <person name="Feltwell T."/>
            <person name="Fraser A."/>
            <person name="Gentles S."/>
            <person name="Goble A."/>
            <person name="Hamlin N."/>
            <person name="Harris D.E."/>
            <person name="Hidalgo J."/>
            <person name="Hodgson G."/>
            <person name="Holroyd S."/>
            <person name="Hornsby T."/>
            <person name="Howarth S."/>
            <person name="Huckle E.J."/>
            <person name="Hunt S."/>
            <person name="Jagels K."/>
            <person name="James K.D."/>
            <person name="Jones L."/>
            <person name="Jones M."/>
            <person name="Leather S."/>
            <person name="McDonald S."/>
            <person name="McLean J."/>
            <person name="Mooney P."/>
            <person name="Moule S."/>
            <person name="Mungall K.L."/>
            <person name="Murphy L.D."/>
            <person name="Niblett D."/>
            <person name="Odell C."/>
            <person name="Oliver K."/>
            <person name="O'Neil S."/>
            <person name="Pearson D."/>
            <person name="Quail M.A."/>
            <person name="Rabbinowitsch E."/>
            <person name="Rutherford K.M."/>
            <person name="Rutter S."/>
            <person name="Saunders D."/>
            <person name="Seeger K."/>
            <person name="Sharp S."/>
            <person name="Skelton J."/>
            <person name="Simmonds M.N."/>
            <person name="Squares R."/>
            <person name="Squares S."/>
            <person name="Stevens K."/>
            <person name="Taylor K."/>
            <person name="Taylor R.G."/>
            <person name="Tivey A."/>
            <person name="Walsh S.V."/>
            <person name="Warren T."/>
            <person name="Whitehead S."/>
            <person name="Woodward J.R."/>
            <person name="Volckaert G."/>
            <person name="Aert R."/>
            <person name="Robben J."/>
            <person name="Grymonprez B."/>
            <person name="Weltjens I."/>
            <person name="Vanstreels E."/>
            <person name="Rieger M."/>
            <person name="Schaefer M."/>
            <person name="Mueller-Auer S."/>
            <person name="Gabel C."/>
            <person name="Fuchs M."/>
            <person name="Duesterhoeft A."/>
            <person name="Fritzc C."/>
            <person name="Holzer E."/>
            <person name="Moestl D."/>
            <person name="Hilbert H."/>
            <person name="Borzym K."/>
            <person name="Langer I."/>
            <person name="Beck A."/>
            <person name="Lehrach H."/>
            <person name="Reinhardt R."/>
            <person name="Pohl T.M."/>
            <person name="Eger P."/>
            <person name="Zimmermann W."/>
            <person name="Wedler H."/>
            <person name="Wambutt R."/>
            <person name="Purnelle B."/>
            <person name="Goffeau A."/>
            <person name="Cadieu E."/>
            <person name="Dreano S."/>
            <person name="Gloux S."/>
            <person name="Lelaure V."/>
            <person name="Mottier S."/>
            <person name="Galibert F."/>
            <person name="Aves S.J."/>
            <person name="Xiang Z."/>
            <person name="Hunt C."/>
            <person name="Moore K."/>
            <person name="Hurst S.M."/>
            <person name="Lucas M."/>
            <person name="Rochet M."/>
            <person name="Gaillardin C."/>
            <person name="Tallada V.A."/>
            <person name="Garzon A."/>
            <person name="Thode G."/>
            <person name="Daga R.R."/>
            <person name="Cruzado L."/>
            <person name="Jimenez J."/>
            <person name="Sanchez M."/>
            <person name="del Rey F."/>
            <person name="Benito J."/>
            <person name="Dominguez A."/>
            <person name="Revuelta J.L."/>
            <person name="Moreno S."/>
            <person name="Armstrong J."/>
            <person name="Forsburg S.L."/>
            <person name="Cerutti L."/>
            <person name="Lowe T."/>
            <person name="McCombie W.R."/>
            <person name="Paulsen I."/>
            <person name="Potashkin J."/>
            <person name="Shpakovski G.V."/>
            <person name="Ussery D."/>
            <person name="Barrell B.G."/>
            <person name="Nurse P."/>
        </authorList>
    </citation>
    <scope>NUCLEOTIDE SEQUENCE [LARGE SCALE GENOMIC DNA]</scope>
    <source>
        <strain>972 / ATCC 24843</strain>
    </source>
</reference>
<reference key="2">
    <citation type="journal article" date="1997" name="DNA Res.">
        <title>Identification of open reading frames in Schizosaccharomyces pombe cDNAs.</title>
        <authorList>
            <person name="Yoshioka S."/>
            <person name="Kato K."/>
            <person name="Nakai K."/>
            <person name="Okayama H."/>
            <person name="Nojima H."/>
        </authorList>
    </citation>
    <scope>NUCLEOTIDE SEQUENCE [LARGE SCALE MRNA] OF 220-476</scope>
    <source>
        <strain>PR745</strain>
    </source>
</reference>
<reference key="3">
    <citation type="journal article" date="2006" name="Nat. Biotechnol.">
        <title>ORFeome cloning and global analysis of protein localization in the fission yeast Schizosaccharomyces pombe.</title>
        <authorList>
            <person name="Matsuyama A."/>
            <person name="Arai R."/>
            <person name="Yashiroda Y."/>
            <person name="Shirai A."/>
            <person name="Kamata A."/>
            <person name="Sekido S."/>
            <person name="Kobayashi Y."/>
            <person name="Hashimoto A."/>
            <person name="Hamamoto M."/>
            <person name="Hiraoka Y."/>
            <person name="Horinouchi S."/>
            <person name="Yoshida M."/>
        </authorList>
    </citation>
    <scope>SUBCELLULAR LOCATION [LARGE SCALE ANALYSIS]</scope>
</reference>
<name>SYRC_SCHPO</name>
<comment type="function">
    <text evidence="1">Forms part of a macromolecular complex that catalyzes the attachment of specific amino acids to cognate tRNAs during protein synthesis.</text>
</comment>
<comment type="catalytic activity">
    <reaction>
        <text>tRNA(Arg) + L-arginine + ATP = L-arginyl-tRNA(Arg) + AMP + diphosphate</text>
        <dbReference type="Rhea" id="RHEA:20301"/>
        <dbReference type="Rhea" id="RHEA-COMP:9658"/>
        <dbReference type="Rhea" id="RHEA-COMP:9673"/>
        <dbReference type="ChEBI" id="CHEBI:30616"/>
        <dbReference type="ChEBI" id="CHEBI:32682"/>
        <dbReference type="ChEBI" id="CHEBI:33019"/>
        <dbReference type="ChEBI" id="CHEBI:78442"/>
        <dbReference type="ChEBI" id="CHEBI:78513"/>
        <dbReference type="ChEBI" id="CHEBI:456215"/>
        <dbReference type="EC" id="6.1.1.19"/>
    </reaction>
</comment>
<comment type="subcellular location">
    <subcellularLocation>
        <location evidence="3">Cytoplasm</location>
    </subcellularLocation>
</comment>
<comment type="similarity">
    <text evidence="4">Belongs to the class-I aminoacyl-tRNA synthetase family.</text>
</comment>
<gene>
    <name type="primary">mrs1</name>
    <name type="synonym">rrs1</name>
    <name type="ORF">SPBC25B2.09c</name>
</gene>
<keyword id="KW-0030">Aminoacyl-tRNA synthetase</keyword>
<keyword id="KW-0067">ATP-binding</keyword>
<keyword id="KW-0963">Cytoplasm</keyword>
<keyword id="KW-0436">Ligase</keyword>
<keyword id="KW-0547">Nucleotide-binding</keyword>
<keyword id="KW-0648">Protein biosynthesis</keyword>
<keyword id="KW-1185">Reference proteome</keyword>
<evidence type="ECO:0000250" key="1"/>
<evidence type="ECO:0000250" key="2">
    <source>
        <dbReference type="UniProtKB" id="Q05506"/>
    </source>
</evidence>
<evidence type="ECO:0000269" key="3">
    <source>
    </source>
</evidence>
<evidence type="ECO:0000305" key="4"/>
<protein>
    <recommendedName>
        <fullName>Probable arginine--tRNA ligase, cytoplasmic</fullName>
        <ecNumber>6.1.1.19</ecNumber>
    </recommendedName>
    <alternativeName>
        <fullName>Arginyl-tRNA synthetase</fullName>
        <shortName>ArgRS</shortName>
    </alternativeName>
</protein>
<sequence>MATSVDQISKSLSTLGLQDLPVFREADIHHNPVDVYRSYISSELSKINGVDVSLIYPALETSISKDSADLNLPVPRLRVKGKPQELAQKWAEAFPKDLVEVTANGIFLRFNFNGPSLTKLILPIIWEQRENYGRNESGSGKVAVIEFSSPNIAKPFHAGHLRSTIIGSFLANLHESQGWKVHRVNYLGDWGKQFGLLAIGYKKYGDEDQLKSNPIRHLYDVYVKVNADATEEDEKIQKDKAEAESKGLPYTPPLSLHDKAREFFKRMEDGDEESLKVWARFRDLSITKLKDTYDRLNIHYDEYDGESQVSLELMNKMVDELRSLNLIEEDGGALLIDLSKHDKKLGKAIVQKRDGTTLYLTRDIGTAYKRYEKYKFDKSIYVVSSQQDMYFSQLFKIFELMGFDWAKKCVHINYGLVQGMSTRKGKAVFLDDIMEVAKEEMHKVMQKNEEKYAQVENPEEVADIVGKTAIRIQDSTGKRINNYAFDWSRMTSFEGDTGPYLQYAHSRLSSVRRNVNYTDEEIMGANLELLTEPDAYDLVRLLGQYPDVLKNAFRFQETSTVVTYLFKLTHAVSKLYDILWVRGRERDIQLARLALFGAAKQVLNNGMTLLGLTPLERM</sequence>
<proteinExistence type="evidence at transcript level"/>
<organism>
    <name type="scientific">Schizosaccharomyces pombe (strain 972 / ATCC 24843)</name>
    <name type="common">Fission yeast</name>
    <dbReference type="NCBI Taxonomy" id="284812"/>
    <lineage>
        <taxon>Eukaryota</taxon>
        <taxon>Fungi</taxon>
        <taxon>Dikarya</taxon>
        <taxon>Ascomycota</taxon>
        <taxon>Taphrinomycotina</taxon>
        <taxon>Schizosaccharomycetes</taxon>
        <taxon>Schizosaccharomycetales</taxon>
        <taxon>Schizosaccharomycetaceae</taxon>
        <taxon>Schizosaccharomyces</taxon>
    </lineage>
</organism>